<comment type="function">
    <text evidence="1">Probably involved in the osmoprotection via the biosynthesis of trehalose. Catalyzes the transfer of glucose from UDP-alpha-D-glucose (UDP-Glc) to D-glucose 6-phosphate (Glc-6-P) to form trehalose-6-phosphate. Acts with retention of the anomeric configuration of the UDP-sugar donor.</text>
</comment>
<comment type="catalytic activity">
    <reaction evidence="1">
        <text>D-glucose 6-phosphate + UDP-alpha-D-glucose = alpha,alpha-trehalose 6-phosphate + UDP + H(+)</text>
        <dbReference type="Rhea" id="RHEA:18889"/>
        <dbReference type="ChEBI" id="CHEBI:15378"/>
        <dbReference type="ChEBI" id="CHEBI:58223"/>
        <dbReference type="ChEBI" id="CHEBI:58429"/>
        <dbReference type="ChEBI" id="CHEBI:58885"/>
        <dbReference type="ChEBI" id="CHEBI:61548"/>
        <dbReference type="EC" id="2.4.1.15"/>
    </reaction>
</comment>
<comment type="pathway">
    <text evidence="1">Glycan biosynthesis; trehalose biosynthesis.</text>
</comment>
<comment type="subunit">
    <text evidence="1">Homotetramer.</text>
</comment>
<comment type="similarity">
    <text evidence="1">Belongs to the glycosyltransferase 20 family.</text>
</comment>
<reference key="1">
    <citation type="journal article" date="2008" name="J. Bacteriol.">
        <title>The pangenome structure of Escherichia coli: comparative genomic analysis of E. coli commensal and pathogenic isolates.</title>
        <authorList>
            <person name="Rasko D.A."/>
            <person name="Rosovitz M.J."/>
            <person name="Myers G.S.A."/>
            <person name="Mongodin E.F."/>
            <person name="Fricke W.F."/>
            <person name="Gajer P."/>
            <person name="Crabtree J."/>
            <person name="Sebaihia M."/>
            <person name="Thomson N.R."/>
            <person name="Chaudhuri R."/>
            <person name="Henderson I.R."/>
            <person name="Sperandio V."/>
            <person name="Ravel J."/>
        </authorList>
    </citation>
    <scope>NUCLEOTIDE SEQUENCE [LARGE SCALE GENOMIC DNA]</scope>
    <source>
        <strain>HS</strain>
    </source>
</reference>
<name>OTSA_ECOHS</name>
<organism>
    <name type="scientific">Escherichia coli O9:H4 (strain HS)</name>
    <dbReference type="NCBI Taxonomy" id="331112"/>
    <lineage>
        <taxon>Bacteria</taxon>
        <taxon>Pseudomonadati</taxon>
        <taxon>Pseudomonadota</taxon>
        <taxon>Gammaproteobacteria</taxon>
        <taxon>Enterobacterales</taxon>
        <taxon>Enterobacteriaceae</taxon>
        <taxon>Escherichia</taxon>
    </lineage>
</organism>
<protein>
    <recommendedName>
        <fullName evidence="1">Trehalose-6-phosphate synthase</fullName>
        <shortName evidence="1">TPS</shortName>
        <ecNumber evidence="1">2.4.1.15</ecNumber>
    </recommendedName>
    <alternativeName>
        <fullName evidence="1">Alpha,alpha-trehalose-phosphate synthase [UDP-forming]</fullName>
    </alternativeName>
    <alternativeName>
        <fullName evidence="1">Osmoregulatory trehalose synthesis protein A</fullName>
        <shortName evidence="1">OtsA</shortName>
    </alternativeName>
    <alternativeName>
        <fullName evidence="1">UDP-glucose-glucosephosphate glucosyltransferase</fullName>
    </alternativeName>
</protein>
<evidence type="ECO:0000250" key="1">
    <source>
        <dbReference type="UniProtKB" id="P31677"/>
    </source>
</evidence>
<proteinExistence type="inferred from homology"/>
<gene>
    <name evidence="1" type="primary">otsA</name>
    <name type="ordered locus">EcHS_A1993</name>
</gene>
<accession>A8A1A0</accession>
<keyword id="KW-0328">Glycosyltransferase</keyword>
<keyword id="KW-0808">Transferase</keyword>
<dbReference type="EC" id="2.4.1.15" evidence="1"/>
<dbReference type="EMBL" id="CP000802">
    <property type="protein sequence ID" value="ABV06304.1"/>
    <property type="molecule type" value="Genomic_DNA"/>
</dbReference>
<dbReference type="RefSeq" id="WP_012135897.1">
    <property type="nucleotide sequence ID" value="NC_009800.1"/>
</dbReference>
<dbReference type="SMR" id="A8A1A0"/>
<dbReference type="CAZy" id="GT20">
    <property type="family name" value="Glycosyltransferase Family 20"/>
</dbReference>
<dbReference type="KEGG" id="ecx:EcHS_A1993"/>
<dbReference type="HOGENOM" id="CLU_002351_7_1_6"/>
<dbReference type="UniPathway" id="UPA00299"/>
<dbReference type="GO" id="GO:0003825">
    <property type="term" value="F:alpha,alpha-trehalose-phosphate synthase (UDP-forming) activity"/>
    <property type="evidence" value="ECO:0007669"/>
    <property type="project" value="UniProtKB-EC"/>
</dbReference>
<dbReference type="GO" id="GO:0005992">
    <property type="term" value="P:trehalose biosynthetic process"/>
    <property type="evidence" value="ECO:0007669"/>
    <property type="project" value="UniProtKB-UniPathway"/>
</dbReference>
<dbReference type="CDD" id="cd03788">
    <property type="entry name" value="GT20_TPS"/>
    <property type="match status" value="1"/>
</dbReference>
<dbReference type="FunFam" id="3.40.50.2000:FF:000024">
    <property type="entry name" value="Trehalose-6-phosphate synthase"/>
    <property type="match status" value="1"/>
</dbReference>
<dbReference type="Gene3D" id="3.40.50.2000">
    <property type="entry name" value="Glycogen Phosphorylase B"/>
    <property type="match status" value="2"/>
</dbReference>
<dbReference type="InterPro" id="IPR001830">
    <property type="entry name" value="Glyco_trans_20"/>
</dbReference>
<dbReference type="InterPro" id="IPR012766">
    <property type="entry name" value="Trehalose_OtsA"/>
</dbReference>
<dbReference type="NCBIfam" id="NF007513">
    <property type="entry name" value="PRK10117.1"/>
    <property type="match status" value="1"/>
</dbReference>
<dbReference type="NCBIfam" id="TIGR02400">
    <property type="entry name" value="trehalose_OtsA"/>
    <property type="match status" value="1"/>
</dbReference>
<dbReference type="PANTHER" id="PTHR10788:SF106">
    <property type="entry name" value="BCDNA.GH08860"/>
    <property type="match status" value="1"/>
</dbReference>
<dbReference type="PANTHER" id="PTHR10788">
    <property type="entry name" value="TREHALOSE-6-PHOSPHATE SYNTHASE"/>
    <property type="match status" value="1"/>
</dbReference>
<dbReference type="Pfam" id="PF00982">
    <property type="entry name" value="Glyco_transf_20"/>
    <property type="match status" value="1"/>
</dbReference>
<dbReference type="SUPFAM" id="SSF53756">
    <property type="entry name" value="UDP-Glycosyltransferase/glycogen phosphorylase"/>
    <property type="match status" value="1"/>
</dbReference>
<sequence>MSRLVVVSNRIAPPDEHAASAGGLAVGILGALKAAGGLWFGWSGETGNEDQPLKKVKKGNITWASFNLSEQDLDEYYNQFSNAVLWPAFHYRLDLVQFQRPAWDGYLRVNALLADKLLPLLQDDDIIWIHDYHLLPFAHELRKRGVNNRIGFFLHIPFPTPEIFNALPTYDTLLEQLCDYDLLGFQTENDRLAFLDCLSNLTRVTTRSAKSHTAWGKAFRTEVYPIGIEPKEIAKQAAGPLPPKLAQLKAELKNVQNIFSVERLDYSKGLPERFLAYEVLLEKYPQHHGKIRYTQIAPTSRGDVQAYQDIRHQLENEAGRINGKYGQLGWTPLYYLNQHFDRKLLMKIFRYSDVGLVTPLRDGMNLVAKEYVAAQDPANPGVLVLSQFAGAANELTSALIVNPYDRDEVAAALDRALTMSLAERISRHAEMLDVIVKNDINHWQECFISDLKQIVPRSAESQQRDKVATFPKLA</sequence>
<feature type="chain" id="PRO_0000348901" description="Trehalose-6-phosphate synthase">
    <location>
        <begin position="1"/>
        <end position="474"/>
    </location>
</feature>
<feature type="binding site" evidence="1">
    <location>
        <position position="10"/>
    </location>
    <ligand>
        <name>D-glucose 6-phosphate</name>
        <dbReference type="ChEBI" id="CHEBI:61548"/>
    </ligand>
</feature>
<feature type="binding site" evidence="1">
    <location>
        <begin position="22"/>
        <end position="23"/>
    </location>
    <ligand>
        <name>UDP-alpha-D-glucose</name>
        <dbReference type="ChEBI" id="CHEBI:58885"/>
    </ligand>
</feature>
<feature type="binding site" evidence="1">
    <location>
        <position position="77"/>
    </location>
    <ligand>
        <name>D-glucose 6-phosphate</name>
        <dbReference type="ChEBI" id="CHEBI:61548"/>
    </ligand>
</feature>
<feature type="binding site" evidence="1">
    <location>
        <position position="131"/>
    </location>
    <ligand>
        <name>D-glucose 6-phosphate</name>
        <dbReference type="ChEBI" id="CHEBI:61548"/>
    </ligand>
</feature>
<feature type="binding site" evidence="1">
    <location>
        <position position="263"/>
    </location>
    <ligand>
        <name>UDP-alpha-D-glucose</name>
        <dbReference type="ChEBI" id="CHEBI:58885"/>
    </ligand>
</feature>
<feature type="binding site" evidence="1">
    <location>
        <position position="268"/>
    </location>
    <ligand>
        <name>UDP-alpha-D-glucose</name>
        <dbReference type="ChEBI" id="CHEBI:58885"/>
    </ligand>
</feature>
<feature type="binding site" evidence="1">
    <location>
        <position position="301"/>
    </location>
    <ligand>
        <name>D-glucose 6-phosphate</name>
        <dbReference type="ChEBI" id="CHEBI:61548"/>
    </ligand>
</feature>
<feature type="binding site" evidence="1">
    <location>
        <position position="340"/>
    </location>
    <ligand>
        <name>UDP-alpha-D-glucose</name>
        <dbReference type="ChEBI" id="CHEBI:58885"/>
    </ligand>
</feature>
<feature type="binding site" evidence="1">
    <location>
        <begin position="366"/>
        <end position="370"/>
    </location>
    <ligand>
        <name>UDP-alpha-D-glucose</name>
        <dbReference type="ChEBI" id="CHEBI:58885"/>
    </ligand>
</feature>
<feature type="site" description="Involved in alpha anomer selectivity" evidence="1">
    <location>
        <position position="86"/>
    </location>
</feature>
<feature type="site" description="Involved in alpha anomer selectivity" evidence="1">
    <location>
        <position position="156"/>
    </location>
</feature>